<proteinExistence type="inferred from homology"/>
<reference key="1">
    <citation type="submission" date="2006-08" db="EMBL/GenBank/DDBJ databases">
        <authorList>
            <consortium name="NIH - Mammalian Gene Collection (MGC) project"/>
        </authorList>
    </citation>
    <scope>NUCLEOTIDE SEQUENCE [LARGE SCALE MRNA]</scope>
    <source>
        <strain>Hereford</strain>
        <tissue>Brain cortex</tissue>
    </source>
</reference>
<comment type="subcellular location">
    <subcellularLocation>
        <location evidence="1">Mitochondrion</location>
    </subcellularLocation>
</comment>
<comment type="domain">
    <text evidence="1">The twin Cx9C motifs are involved in the recognition by the mitochondrial disulfide relay system.</text>
</comment>
<comment type="similarity">
    <text evidence="3">Belongs to the CMC4 family.</text>
</comment>
<dbReference type="EMBL" id="BC120453">
    <property type="protein sequence ID" value="AAI20454.1"/>
    <property type="molecule type" value="mRNA"/>
</dbReference>
<dbReference type="RefSeq" id="NP_001071619.1">
    <property type="nucleotide sequence ID" value="NM_001078151.1"/>
</dbReference>
<dbReference type="RefSeq" id="XP_015316982.1">
    <property type="nucleotide sequence ID" value="XM_015461496.1"/>
</dbReference>
<dbReference type="SMR" id="Q0VBY0"/>
<dbReference type="FunCoup" id="Q0VBY0">
    <property type="interactions" value="72"/>
</dbReference>
<dbReference type="STRING" id="9913.ENSBTAP00000056775"/>
<dbReference type="PaxDb" id="9913-ENSBTAP00000010275"/>
<dbReference type="GeneID" id="777691"/>
<dbReference type="KEGG" id="bta:777691"/>
<dbReference type="CTD" id="100272147"/>
<dbReference type="VEuPathDB" id="HostDB:ENSBTAG00000007813"/>
<dbReference type="eggNOG" id="ENOG502SC73">
    <property type="taxonomic scope" value="Eukaryota"/>
</dbReference>
<dbReference type="HOGENOM" id="CLU_177210_1_1_1"/>
<dbReference type="InParanoid" id="Q0VBY0"/>
<dbReference type="TreeFam" id="TF353119"/>
<dbReference type="Proteomes" id="UP000009136">
    <property type="component" value="Chromosome X"/>
</dbReference>
<dbReference type="Bgee" id="ENSBTAG00000007813">
    <property type="expression patterns" value="Expressed in oocyte and 104 other cell types or tissues"/>
</dbReference>
<dbReference type="GO" id="GO:0005758">
    <property type="term" value="C:mitochondrial intermembrane space"/>
    <property type="evidence" value="ECO:0000318"/>
    <property type="project" value="GO_Central"/>
</dbReference>
<dbReference type="FunFam" id="1.10.287.1130:FF:000002">
    <property type="entry name" value="cx9C motif-containing protein 4 isoform X2"/>
    <property type="match status" value="1"/>
</dbReference>
<dbReference type="Gene3D" id="1.10.287.1130">
    <property type="entry name" value="CytochromE C oxidase copper chaperone"/>
    <property type="match status" value="1"/>
</dbReference>
<dbReference type="InterPro" id="IPR027179">
    <property type="entry name" value="CMC4"/>
</dbReference>
<dbReference type="InterPro" id="IPR009069">
    <property type="entry name" value="Cys_alpha_HP_mot_SF"/>
</dbReference>
<dbReference type="PANTHER" id="PTHR15590">
    <property type="entry name" value="CX9C MOTIF-CONTAINING PROTEIN 4"/>
    <property type="match status" value="1"/>
</dbReference>
<dbReference type="PANTHER" id="PTHR15590:SF0">
    <property type="entry name" value="CX9C MOTIF-CONTAINING PROTEIN 4"/>
    <property type="match status" value="1"/>
</dbReference>
<dbReference type="Pfam" id="PF08991">
    <property type="entry name" value="CMC4"/>
    <property type="match status" value="1"/>
</dbReference>
<dbReference type="SUPFAM" id="SSF47072">
    <property type="entry name" value="Cysteine alpha-hairpin motif"/>
    <property type="match status" value="1"/>
</dbReference>
<dbReference type="PROSITE" id="PS51808">
    <property type="entry name" value="CHCH"/>
    <property type="match status" value="1"/>
</dbReference>
<feature type="chain" id="PRO_0000402806" description="Cx9C motif-containing protein 4">
    <location>
        <begin position="1"/>
        <end position="68"/>
    </location>
</feature>
<feature type="domain" description="CHCH" evidence="2">
    <location>
        <begin position="4"/>
        <end position="46"/>
    </location>
</feature>
<feature type="short sequence motif" description="Cx9C motif 1" evidence="2">
    <location>
        <begin position="7"/>
        <end position="17"/>
    </location>
</feature>
<feature type="short sequence motif" description="Cx9C motif 2" evidence="2">
    <location>
        <begin position="28"/>
        <end position="38"/>
    </location>
</feature>
<feature type="disulfide bond" evidence="2">
    <location>
        <begin position="7"/>
        <end position="38"/>
    </location>
</feature>
<feature type="disulfide bond" evidence="2">
    <location>
        <begin position="17"/>
        <end position="28"/>
    </location>
</feature>
<feature type="disulfide bond" evidence="1">
    <location>
        <begin position="39"/>
        <end position="50"/>
    </location>
</feature>
<evidence type="ECO:0000250" key="1"/>
<evidence type="ECO:0000255" key="2">
    <source>
        <dbReference type="PROSITE-ProRule" id="PRU01150"/>
    </source>
</evidence>
<evidence type="ECO:0000305" key="3"/>
<name>CMC4_BOVIN</name>
<keyword id="KW-1015">Disulfide bond</keyword>
<keyword id="KW-0496">Mitochondrion</keyword>
<keyword id="KW-1185">Reference proteome</keyword>
<protein>
    <recommendedName>
        <fullName>Cx9C motif-containing protein 4</fullName>
    </recommendedName>
    <alternativeName>
        <fullName>Mature T-cell proliferation 1 neighbor protein</fullName>
    </alternativeName>
</protein>
<organism>
    <name type="scientific">Bos taurus</name>
    <name type="common">Bovine</name>
    <dbReference type="NCBI Taxonomy" id="9913"/>
    <lineage>
        <taxon>Eukaryota</taxon>
        <taxon>Metazoa</taxon>
        <taxon>Chordata</taxon>
        <taxon>Craniata</taxon>
        <taxon>Vertebrata</taxon>
        <taxon>Euteleostomi</taxon>
        <taxon>Mammalia</taxon>
        <taxon>Eutheria</taxon>
        <taxon>Laurasiatheria</taxon>
        <taxon>Artiodactyla</taxon>
        <taxon>Ruminantia</taxon>
        <taxon>Pecora</taxon>
        <taxon>Bovidae</taxon>
        <taxon>Bovinae</taxon>
        <taxon>Bos</taxon>
    </lineage>
</organism>
<sequence length="68" mass="7873">MPQKDPCQKQACEIQKCLQANNYMESKCQAVIEELRKCCARYPKGRSLICSGFEKEEEEKQTLKCTPQ</sequence>
<gene>
    <name type="primary">CMC4</name>
    <name type="synonym">MTCP1NB</name>
</gene>
<accession>Q0VBY0</accession>